<comment type="function">
    <text evidence="1">Binds ATP, opioids and phosphatidylethanolamine. Has lower affinity for phosphatidylinositol and phosphatidylcholine. Serine protease inhibitor which inhibits thrombin, neuropsin and chymotrypsin but not trypsin, tissue type plasminogen activator and elastase (By similarity). Inhibits the kinase activity of RAF1 by inhibiting its activation and by dissociating the RAF1/MEK complex and acting as a competitive inhibitor of MEK phosphorylation (By similarity).</text>
</comment>
<comment type="function">
    <text evidence="1">HCNP may be involved in the function of the presynaptic cholinergic neurons of the central nervous system. HCNP increases the production of choline acetyltransferase but not acetylcholinesterase. Seems to be mediated by a specific receptor (By similarity).</text>
</comment>
<comment type="subunit">
    <text evidence="1">Has a tendency to form dimers by disulfide cross-linking. Interacts with RAF1 and this interaction is enhanced if RAF1 is phosphorylated on residues 'Ser-338', 'Ser-339', 'Tyr-340' and 'Tyr-341'. Interacts with ALOX15; in response to IL13/interleukin-13, prevents the interaction of PEBP1 with RAF1 to activate the ERK signaling cascade (By similarity).</text>
</comment>
<comment type="subcellular location">
    <subcellularLocation>
        <location evidence="1">Cytoplasm</location>
    </subcellularLocation>
</comment>
<comment type="similarity">
    <text evidence="4">Belongs to the phosphatidylethanolamine-binding protein family.</text>
</comment>
<gene>
    <name type="primary">PEBP1</name>
    <name type="synonym">PBP</name>
</gene>
<keyword id="KW-0067">ATP-binding</keyword>
<keyword id="KW-0963">Cytoplasm</keyword>
<keyword id="KW-1015">Disulfide bond</keyword>
<keyword id="KW-0446">Lipid-binding</keyword>
<keyword id="KW-0547">Nucleotide-binding</keyword>
<keyword id="KW-0597">Phosphoprotein</keyword>
<keyword id="KW-0646">Protease inhibitor</keyword>
<keyword id="KW-1185">Reference proteome</keyword>
<keyword id="KW-0722">Serine protease inhibitor</keyword>
<reference key="1">
    <citation type="submission" date="2004-11" db="EMBL/GenBank/DDBJ databases">
        <authorList>
            <consortium name="The German cDNA consortium"/>
        </authorList>
    </citation>
    <scope>NUCLEOTIDE SEQUENCE [LARGE SCALE MRNA]</scope>
    <source>
        <tissue>Brain cortex</tissue>
    </source>
</reference>
<name>PEBP1_PONAB</name>
<sequence length="187" mass="21099">MPVDLSKWSGPLSLQEVDERPQHPLHVTYAGAAVDELGKVLTPTQVKNRPTSISWEGLDSGKLYTLVLTDPDAPSRKDPKYREWHHFLVVNMKGNDISSGTVLSDYVGSGPPKGTGLHRYVWLVYEQDRPLKCDEPILSNRSGDHRGKFKVASFRKKYELRAPVAGTCYQAEWDDYVPKLYEQLSGK</sequence>
<feature type="chain" id="PRO_0000041781" description="Phosphatidylethanolamine-binding protein 1">
    <location>
        <begin position="1"/>
        <end position="187"/>
    </location>
</feature>
<feature type="peptide" id="PRO_0000041782" description="Hippocampal cholinergic neurostimulating peptide">
    <location>
        <begin position="1"/>
        <end position="12"/>
    </location>
</feature>
<feature type="region of interest" description="Interaction with RAF1" evidence="1">
    <location>
        <begin position="93"/>
        <end position="134"/>
    </location>
</feature>
<feature type="modified residue" description="Phosphoserine" evidence="2">
    <location>
        <position position="6"/>
    </location>
</feature>
<feature type="modified residue" description="Phosphoserine" evidence="3">
    <location>
        <position position="13"/>
    </location>
</feature>
<feature type="modified residue" description="Phosphothreonine" evidence="2">
    <location>
        <position position="42"/>
    </location>
</feature>
<feature type="modified residue" description="Phosphoserine" evidence="2">
    <location>
        <position position="52"/>
    </location>
</feature>
<feature type="modified residue" description="Phosphoserine" evidence="2">
    <location>
        <position position="54"/>
    </location>
</feature>
<feature type="modified residue" description="Phosphoserine" evidence="2">
    <location>
        <position position="98"/>
    </location>
</feature>
<feature type="modified residue" description="Phosphoserine" evidence="2">
    <location>
        <position position="153"/>
    </location>
</feature>
<organism>
    <name type="scientific">Pongo abelii</name>
    <name type="common">Sumatran orangutan</name>
    <name type="synonym">Pongo pygmaeus abelii</name>
    <dbReference type="NCBI Taxonomy" id="9601"/>
    <lineage>
        <taxon>Eukaryota</taxon>
        <taxon>Metazoa</taxon>
        <taxon>Chordata</taxon>
        <taxon>Craniata</taxon>
        <taxon>Vertebrata</taxon>
        <taxon>Euteleostomi</taxon>
        <taxon>Mammalia</taxon>
        <taxon>Eutheria</taxon>
        <taxon>Euarchontoglires</taxon>
        <taxon>Primates</taxon>
        <taxon>Haplorrhini</taxon>
        <taxon>Catarrhini</taxon>
        <taxon>Hominidae</taxon>
        <taxon>Pongo</taxon>
    </lineage>
</organism>
<accession>Q5R4R0</accession>
<protein>
    <recommendedName>
        <fullName>Phosphatidylethanolamine-binding protein 1</fullName>
        <shortName>PEBP-1</shortName>
    </recommendedName>
    <alternativeName>
        <fullName>HCNPpp</fullName>
    </alternativeName>
    <component>
        <recommendedName>
            <fullName>Hippocampal cholinergic neurostimulating peptide</fullName>
            <shortName>HCNP</shortName>
        </recommendedName>
    </component>
</protein>
<proteinExistence type="evidence at transcript level"/>
<evidence type="ECO:0000250" key="1"/>
<evidence type="ECO:0000250" key="2">
    <source>
        <dbReference type="UniProtKB" id="P30086"/>
    </source>
</evidence>
<evidence type="ECO:0000250" key="3">
    <source>
        <dbReference type="UniProtKB" id="P31044"/>
    </source>
</evidence>
<evidence type="ECO:0000305" key="4"/>
<dbReference type="EMBL" id="CR861185">
    <property type="protein sequence ID" value="CAH93256.1"/>
    <property type="molecule type" value="mRNA"/>
</dbReference>
<dbReference type="RefSeq" id="NP_001126915.1">
    <property type="nucleotide sequence ID" value="NM_001133443.1"/>
</dbReference>
<dbReference type="BMRB" id="Q5R4R0"/>
<dbReference type="SMR" id="Q5R4R0"/>
<dbReference type="FunCoup" id="Q5R4R0">
    <property type="interactions" value="963"/>
</dbReference>
<dbReference type="STRING" id="9601.ENSPPYP00000005712"/>
<dbReference type="MEROPS" id="I51.002"/>
<dbReference type="GeneID" id="100173932"/>
<dbReference type="KEGG" id="pon:100173932"/>
<dbReference type="CTD" id="5037"/>
<dbReference type="eggNOG" id="KOG3346">
    <property type="taxonomic scope" value="Eukaryota"/>
</dbReference>
<dbReference type="HOGENOM" id="CLU_043994_5_0_1"/>
<dbReference type="InParanoid" id="Q5R4R0"/>
<dbReference type="OrthoDB" id="2506647at2759"/>
<dbReference type="Proteomes" id="UP000001595">
    <property type="component" value="Unplaced"/>
</dbReference>
<dbReference type="GO" id="GO:0005737">
    <property type="term" value="C:cytoplasm"/>
    <property type="evidence" value="ECO:0007669"/>
    <property type="project" value="UniProtKB-SubCell"/>
</dbReference>
<dbReference type="GO" id="GO:0005524">
    <property type="term" value="F:ATP binding"/>
    <property type="evidence" value="ECO:0007669"/>
    <property type="project" value="UniProtKB-KW"/>
</dbReference>
<dbReference type="GO" id="GO:0008289">
    <property type="term" value="F:lipid binding"/>
    <property type="evidence" value="ECO:0007669"/>
    <property type="project" value="UniProtKB-KW"/>
</dbReference>
<dbReference type="GO" id="GO:0004867">
    <property type="term" value="F:serine-type endopeptidase inhibitor activity"/>
    <property type="evidence" value="ECO:0007669"/>
    <property type="project" value="UniProtKB-KW"/>
</dbReference>
<dbReference type="GO" id="GO:0043409">
    <property type="term" value="P:negative regulation of MAPK cascade"/>
    <property type="evidence" value="ECO:0007669"/>
    <property type="project" value="TreeGrafter"/>
</dbReference>
<dbReference type="CDD" id="cd00866">
    <property type="entry name" value="PEBP_euk"/>
    <property type="match status" value="1"/>
</dbReference>
<dbReference type="FunFam" id="3.90.280.10:FF:000003">
    <property type="entry name" value="phosphatidylethanolamine-binding protein 1"/>
    <property type="match status" value="1"/>
</dbReference>
<dbReference type="Gene3D" id="3.90.280.10">
    <property type="entry name" value="PEBP-like"/>
    <property type="match status" value="1"/>
</dbReference>
<dbReference type="InterPro" id="IPR008914">
    <property type="entry name" value="PEBP"/>
</dbReference>
<dbReference type="InterPro" id="IPR036610">
    <property type="entry name" value="PEBP-like_sf"/>
</dbReference>
<dbReference type="InterPro" id="IPR035810">
    <property type="entry name" value="PEBP_euk"/>
</dbReference>
<dbReference type="InterPro" id="IPR001858">
    <property type="entry name" value="Phosphatidylethanolamine-bd_CS"/>
</dbReference>
<dbReference type="PANTHER" id="PTHR11362">
    <property type="entry name" value="PHOSPHATIDYLETHANOLAMINE-BINDING PROTEIN"/>
    <property type="match status" value="1"/>
</dbReference>
<dbReference type="PANTHER" id="PTHR11362:SF151">
    <property type="entry name" value="PHOSPHATIDYLETHANOLAMINE-BINDING PROTEIN 1"/>
    <property type="match status" value="1"/>
</dbReference>
<dbReference type="Pfam" id="PF01161">
    <property type="entry name" value="PBP"/>
    <property type="match status" value="1"/>
</dbReference>
<dbReference type="SUPFAM" id="SSF49777">
    <property type="entry name" value="PEBP-like"/>
    <property type="match status" value="1"/>
</dbReference>
<dbReference type="PROSITE" id="PS01220">
    <property type="entry name" value="PBP"/>
    <property type="match status" value="1"/>
</dbReference>